<name>RNT_SALCH</name>
<organism>
    <name type="scientific">Salmonella choleraesuis (strain SC-B67)</name>
    <dbReference type="NCBI Taxonomy" id="321314"/>
    <lineage>
        <taxon>Bacteria</taxon>
        <taxon>Pseudomonadati</taxon>
        <taxon>Pseudomonadota</taxon>
        <taxon>Gammaproteobacteria</taxon>
        <taxon>Enterobacterales</taxon>
        <taxon>Enterobacteriaceae</taxon>
        <taxon>Salmonella</taxon>
    </lineage>
</organism>
<proteinExistence type="inferred from homology"/>
<evidence type="ECO:0000255" key="1">
    <source>
        <dbReference type="HAMAP-Rule" id="MF_00157"/>
    </source>
</evidence>
<feature type="chain" id="PRO_1000011410" description="Ribonuclease T">
    <location>
        <begin position="1"/>
        <end position="215"/>
    </location>
</feature>
<feature type="domain" description="Exonuclease" evidence="1">
    <location>
        <begin position="20"/>
        <end position="194"/>
    </location>
</feature>
<feature type="active site" description="Proton donor/acceptor" evidence="1">
    <location>
        <position position="181"/>
    </location>
</feature>
<feature type="binding site" evidence="1">
    <location>
        <position position="23"/>
    </location>
    <ligand>
        <name>Mg(2+)</name>
        <dbReference type="ChEBI" id="CHEBI:18420"/>
        <label>1</label>
        <note>catalytic</note>
    </ligand>
</feature>
<feature type="binding site" evidence="1">
    <location>
        <position position="23"/>
    </location>
    <ligand>
        <name>Mg(2+)</name>
        <dbReference type="ChEBI" id="CHEBI:18420"/>
        <label>2</label>
        <note>catalytic</note>
    </ligand>
</feature>
<feature type="binding site" evidence="1">
    <location>
        <position position="25"/>
    </location>
    <ligand>
        <name>Mg(2+)</name>
        <dbReference type="ChEBI" id="CHEBI:18420"/>
        <label>2</label>
        <note>catalytic</note>
    </ligand>
</feature>
<feature type="binding site" evidence="1">
    <location>
        <position position="181"/>
    </location>
    <ligand>
        <name>Mg(2+)</name>
        <dbReference type="ChEBI" id="CHEBI:18420"/>
        <label>2</label>
        <note>catalytic</note>
    </ligand>
</feature>
<feature type="binding site" evidence="1">
    <location>
        <position position="186"/>
    </location>
    <ligand>
        <name>Mg(2+)</name>
        <dbReference type="ChEBI" id="CHEBI:18420"/>
        <label>2</label>
        <note>catalytic</note>
    </ligand>
</feature>
<feature type="site" description="Important for substrate binding and specificity" evidence="1">
    <location>
        <position position="29"/>
    </location>
</feature>
<feature type="site" description="Important for substrate binding and specificity" evidence="1">
    <location>
        <position position="77"/>
    </location>
</feature>
<feature type="site" description="Important for substrate binding and specificity" evidence="1">
    <location>
        <position position="124"/>
    </location>
</feature>
<feature type="site" description="Important for substrate binding and specificity" evidence="1">
    <location>
        <position position="146"/>
    </location>
</feature>
<reference key="1">
    <citation type="journal article" date="2005" name="Nucleic Acids Res.">
        <title>The genome sequence of Salmonella enterica serovar Choleraesuis, a highly invasive and resistant zoonotic pathogen.</title>
        <authorList>
            <person name="Chiu C.-H."/>
            <person name="Tang P."/>
            <person name="Chu C."/>
            <person name="Hu S."/>
            <person name="Bao Q."/>
            <person name="Yu J."/>
            <person name="Chou Y.-Y."/>
            <person name="Wang H.-S."/>
            <person name="Lee Y.-S."/>
        </authorList>
    </citation>
    <scope>NUCLEOTIDE SEQUENCE [LARGE SCALE GENOMIC DNA]</scope>
    <source>
        <strain>SC-B67</strain>
    </source>
</reference>
<dbReference type="EC" id="3.1.13.-" evidence="1"/>
<dbReference type="EMBL" id="AE017220">
    <property type="protein sequence ID" value="AAX65359.1"/>
    <property type="molecule type" value="Genomic_DNA"/>
</dbReference>
<dbReference type="RefSeq" id="WP_001282272.1">
    <property type="nucleotide sequence ID" value="NC_006905.1"/>
</dbReference>
<dbReference type="SMR" id="Q57PK2"/>
<dbReference type="KEGG" id="sec:SCH_1453"/>
<dbReference type="HOGENOM" id="CLU_082724_0_0_6"/>
<dbReference type="Proteomes" id="UP000000538">
    <property type="component" value="Chromosome"/>
</dbReference>
<dbReference type="GO" id="GO:0005829">
    <property type="term" value="C:cytosol"/>
    <property type="evidence" value="ECO:0007669"/>
    <property type="project" value="TreeGrafter"/>
</dbReference>
<dbReference type="GO" id="GO:0008408">
    <property type="term" value="F:3'-5' exonuclease activity"/>
    <property type="evidence" value="ECO:0007669"/>
    <property type="project" value="TreeGrafter"/>
</dbReference>
<dbReference type="GO" id="GO:0000287">
    <property type="term" value="F:magnesium ion binding"/>
    <property type="evidence" value="ECO:0007669"/>
    <property type="project" value="UniProtKB-UniRule"/>
</dbReference>
<dbReference type="GO" id="GO:0003676">
    <property type="term" value="F:nucleic acid binding"/>
    <property type="evidence" value="ECO:0007669"/>
    <property type="project" value="InterPro"/>
</dbReference>
<dbReference type="GO" id="GO:0016896">
    <property type="term" value="F:RNA exonuclease activity, producing 5'-phosphomonoesters"/>
    <property type="evidence" value="ECO:0007669"/>
    <property type="project" value="UniProtKB-UniRule"/>
</dbReference>
<dbReference type="GO" id="GO:0045004">
    <property type="term" value="P:DNA replication proofreading"/>
    <property type="evidence" value="ECO:0007669"/>
    <property type="project" value="TreeGrafter"/>
</dbReference>
<dbReference type="GO" id="GO:0008033">
    <property type="term" value="P:tRNA processing"/>
    <property type="evidence" value="ECO:0007669"/>
    <property type="project" value="UniProtKB-KW"/>
</dbReference>
<dbReference type="CDD" id="cd06134">
    <property type="entry name" value="RNaseT"/>
    <property type="match status" value="1"/>
</dbReference>
<dbReference type="FunFam" id="3.30.420.10:FF:000009">
    <property type="entry name" value="Ribonuclease T"/>
    <property type="match status" value="1"/>
</dbReference>
<dbReference type="Gene3D" id="3.30.420.10">
    <property type="entry name" value="Ribonuclease H-like superfamily/Ribonuclease H"/>
    <property type="match status" value="1"/>
</dbReference>
<dbReference type="HAMAP" id="MF_00157">
    <property type="entry name" value="RNase_T"/>
    <property type="match status" value="1"/>
</dbReference>
<dbReference type="InterPro" id="IPR013520">
    <property type="entry name" value="Exonuclease_RNaseT/DNA_pol3"/>
</dbReference>
<dbReference type="InterPro" id="IPR005987">
    <property type="entry name" value="RNase_T"/>
</dbReference>
<dbReference type="InterPro" id="IPR012337">
    <property type="entry name" value="RNaseH-like_sf"/>
</dbReference>
<dbReference type="InterPro" id="IPR036397">
    <property type="entry name" value="RNaseH_sf"/>
</dbReference>
<dbReference type="NCBIfam" id="TIGR01298">
    <property type="entry name" value="RNaseT"/>
    <property type="match status" value="1"/>
</dbReference>
<dbReference type="PANTHER" id="PTHR30231">
    <property type="entry name" value="DNA POLYMERASE III SUBUNIT EPSILON"/>
    <property type="match status" value="1"/>
</dbReference>
<dbReference type="PANTHER" id="PTHR30231:SF2">
    <property type="entry name" value="RIBONUCLEASE T"/>
    <property type="match status" value="1"/>
</dbReference>
<dbReference type="Pfam" id="PF00929">
    <property type="entry name" value="RNase_T"/>
    <property type="match status" value="1"/>
</dbReference>
<dbReference type="SMART" id="SM00479">
    <property type="entry name" value="EXOIII"/>
    <property type="match status" value="1"/>
</dbReference>
<dbReference type="SUPFAM" id="SSF53098">
    <property type="entry name" value="Ribonuclease H-like"/>
    <property type="match status" value="1"/>
</dbReference>
<protein>
    <recommendedName>
        <fullName evidence="1">Ribonuclease T</fullName>
        <ecNumber evidence="1">3.1.13.-</ecNumber>
    </recommendedName>
    <alternativeName>
        <fullName evidence="1">Exoribonuclease T</fullName>
        <shortName evidence="1">RNase T</shortName>
    </alternativeName>
</protein>
<sequence>MSDNAQLSGLCDRFRGFYPVVIDVETAGFNAKTDALLEIAAITLKMDEQGWLMPDTTLHFHVEPFAGANLQPEALAFNGIDPSNPLRGAVSEYEALHAIFKMVRKGIKDSGCSRAIMVAHNATFDHSFMMAAAERASLKRNPFHPFVTFDTAALSGLALGQTVLSKACLAAGMEFDGEKAHSALYDTERTAVLFCEIVNRWKRLGGWPLPLPTDK</sequence>
<keyword id="KW-0269">Exonuclease</keyword>
<keyword id="KW-0378">Hydrolase</keyword>
<keyword id="KW-0460">Magnesium</keyword>
<keyword id="KW-0479">Metal-binding</keyword>
<keyword id="KW-0540">Nuclease</keyword>
<keyword id="KW-0819">tRNA processing</keyword>
<accession>Q57PK2</accession>
<gene>
    <name evidence="1" type="primary">rnt</name>
    <name type="ordered locus">SCH_1453</name>
</gene>
<comment type="function">
    <text evidence="1">Trims short 3' overhangs of a variety of RNA species, leaving a one or two nucleotide 3' overhang. Responsible for the end-turnover of tRNA: specifically removes the terminal AMP residue from uncharged tRNA (tRNA-C-C-A). Also appears to be involved in tRNA biosynthesis.</text>
</comment>
<comment type="cofactor">
    <cofactor evidence="1">
        <name>Mg(2+)</name>
        <dbReference type="ChEBI" id="CHEBI:18420"/>
    </cofactor>
    <text evidence="1">Binds two Mg(2+) per subunit. The active form of the enzyme binds two Mg(2+) ions in its active site. The first Mg(2+) forms only one salt bridge with the protein.</text>
</comment>
<comment type="subunit">
    <text evidence="1">Homodimer.</text>
</comment>
<comment type="similarity">
    <text evidence="1">Belongs to the RNase T family.</text>
</comment>